<dbReference type="EMBL" id="D85463">
    <property type="protein sequence ID" value="BAB46965.1"/>
    <property type="molecule type" value="mRNA"/>
</dbReference>
<dbReference type="EMBL" id="AJ312058">
    <property type="protein sequence ID" value="CAC38356.1"/>
    <property type="molecule type" value="mRNA"/>
</dbReference>
<dbReference type="CCDS" id="CCDS51255.1">
    <molecule id="Q924X6-2"/>
</dbReference>
<dbReference type="PIR" id="JE0237">
    <property type="entry name" value="JE0237"/>
</dbReference>
<dbReference type="RefSeq" id="NP_444303.2">
    <molecule id="Q924X6-1"/>
    <property type="nucleotide sequence ID" value="NM_053073.3"/>
</dbReference>
<dbReference type="RefSeq" id="XP_011238759.1">
    <property type="nucleotide sequence ID" value="XM_011240457.2"/>
</dbReference>
<dbReference type="SMR" id="Q924X6"/>
<dbReference type="CORUM" id="Q924X6"/>
<dbReference type="DIP" id="DIP-33284N"/>
<dbReference type="FunCoup" id="Q924X6">
    <property type="interactions" value="565"/>
</dbReference>
<dbReference type="IntAct" id="Q924X6">
    <property type="interactions" value="9"/>
</dbReference>
<dbReference type="STRING" id="10090.ENSMUSP00000102342"/>
<dbReference type="TCDB" id="9.B.87.1.9">
    <property type="family name" value="the selenoprotein p receptor (selp-receptor) family"/>
</dbReference>
<dbReference type="GlyConnect" id="2487">
    <property type="glycosylation" value="2 N-Linked glycans (2 sites)"/>
</dbReference>
<dbReference type="GlyCosmos" id="Q924X6">
    <property type="glycosylation" value="4 sites, 2 glycans"/>
</dbReference>
<dbReference type="GlyGen" id="Q924X6">
    <property type="glycosylation" value="6 sites, 5 N-linked glycans (3 sites)"/>
</dbReference>
<dbReference type="iPTMnet" id="Q924X6"/>
<dbReference type="PhosphoSitePlus" id="Q924X6"/>
<dbReference type="SwissPalm" id="Q924X6"/>
<dbReference type="jPOST" id="Q924X6"/>
<dbReference type="ProteomicsDB" id="292363">
    <molecule id="Q924X6-1"/>
</dbReference>
<dbReference type="ProteomicsDB" id="292364">
    <molecule id="Q924X6-2"/>
</dbReference>
<dbReference type="Antibodypedia" id="33078">
    <property type="antibodies" value="417 antibodies from 33 providers"/>
</dbReference>
<dbReference type="Ensembl" id="ENSMUST00000143601.8">
    <molecule id="Q924X6-1"/>
    <property type="protein sequence ID" value="ENSMUSP00000115854.2"/>
    <property type="gene ID" value="ENSMUSG00000028613.16"/>
</dbReference>
<dbReference type="Ensembl" id="ENSMUST00000238569.2">
    <molecule id="Q924X6-1"/>
    <property type="protein sequence ID" value="ENSMUSP00000158644.2"/>
    <property type="gene ID" value="ENSMUSG00000028613.16"/>
</dbReference>
<dbReference type="GeneID" id="16975"/>
<dbReference type="AGR" id="MGI:1340044"/>
<dbReference type="MGI" id="MGI:1340044">
    <property type="gene designation" value="Lrp8"/>
</dbReference>
<dbReference type="VEuPathDB" id="HostDB:ENSMUSG00000028613"/>
<dbReference type="eggNOG" id="KOG1215">
    <property type="taxonomic scope" value="Eukaryota"/>
</dbReference>
<dbReference type="GeneTree" id="ENSGT00940000154819"/>
<dbReference type="InParanoid" id="Q924X6"/>
<dbReference type="OMA" id="XLNECLH"/>
<dbReference type="OrthoDB" id="5958943at2759"/>
<dbReference type="PhylomeDB" id="Q924X6"/>
<dbReference type="Reactome" id="R-MMU-432142">
    <property type="pathway name" value="Platelet sensitization by LDL"/>
</dbReference>
<dbReference type="Reactome" id="R-MMU-975634">
    <property type="pathway name" value="Retinoid metabolism and transport"/>
</dbReference>
<dbReference type="BioGRID-ORCS" id="16975">
    <property type="hits" value="3 hits in 32 CRISPR screens"/>
</dbReference>
<dbReference type="ChiTaRS" id="Lrp8">
    <property type="organism name" value="mouse"/>
</dbReference>
<dbReference type="PRO" id="PR:Q924X6"/>
<dbReference type="Proteomes" id="UP000000589">
    <property type="component" value="Chromosome 4"/>
</dbReference>
<dbReference type="RNAct" id="Q924X6">
    <property type="molecule type" value="protein"/>
</dbReference>
<dbReference type="Bgee" id="ENSMUSG00000028613">
    <property type="expression patterns" value="Expressed in embryonic brain and 171 other cell types or tissues"/>
</dbReference>
<dbReference type="ExpressionAtlas" id="Q924X6">
    <property type="expression patterns" value="baseline and differential"/>
</dbReference>
<dbReference type="GO" id="GO:0030424">
    <property type="term" value="C:axon"/>
    <property type="evidence" value="ECO:0007669"/>
    <property type="project" value="Ensembl"/>
</dbReference>
<dbReference type="GO" id="GO:0005901">
    <property type="term" value="C:caveola"/>
    <property type="evidence" value="ECO:0007669"/>
    <property type="project" value="Ensembl"/>
</dbReference>
<dbReference type="GO" id="GO:0009986">
    <property type="term" value="C:cell surface"/>
    <property type="evidence" value="ECO:0000314"/>
    <property type="project" value="MGI"/>
</dbReference>
<dbReference type="GO" id="GO:0030425">
    <property type="term" value="C:dendrite"/>
    <property type="evidence" value="ECO:0007669"/>
    <property type="project" value="Ensembl"/>
</dbReference>
<dbReference type="GO" id="GO:0005615">
    <property type="term" value="C:extracellular space"/>
    <property type="evidence" value="ECO:0000314"/>
    <property type="project" value="BHF-UCL"/>
</dbReference>
<dbReference type="GO" id="GO:0098978">
    <property type="term" value="C:glutamatergic synapse"/>
    <property type="evidence" value="ECO:0000314"/>
    <property type="project" value="SynGO"/>
</dbReference>
<dbReference type="GO" id="GO:0005875">
    <property type="term" value="C:microtubule associated complex"/>
    <property type="evidence" value="ECO:0007669"/>
    <property type="project" value="Ensembl"/>
</dbReference>
<dbReference type="GO" id="GO:0043025">
    <property type="term" value="C:neuronal cell body"/>
    <property type="evidence" value="ECO:0007669"/>
    <property type="project" value="Ensembl"/>
</dbReference>
<dbReference type="GO" id="GO:0005886">
    <property type="term" value="C:plasma membrane"/>
    <property type="evidence" value="ECO:0000304"/>
    <property type="project" value="MGI"/>
</dbReference>
<dbReference type="GO" id="GO:0098839">
    <property type="term" value="C:postsynaptic density membrane"/>
    <property type="evidence" value="ECO:0000314"/>
    <property type="project" value="SynGO"/>
</dbReference>
<dbReference type="GO" id="GO:0043235">
    <property type="term" value="C:receptor complex"/>
    <property type="evidence" value="ECO:0000266"/>
    <property type="project" value="MGI"/>
</dbReference>
<dbReference type="GO" id="GO:0098685">
    <property type="term" value="C:Schaffer collateral - CA1 synapse"/>
    <property type="evidence" value="ECO:0000314"/>
    <property type="project" value="SynGO"/>
</dbReference>
<dbReference type="GO" id="GO:0001540">
    <property type="term" value="F:amyloid-beta binding"/>
    <property type="evidence" value="ECO:0000353"/>
    <property type="project" value="MGI"/>
</dbReference>
<dbReference type="GO" id="GO:0034185">
    <property type="term" value="F:apolipoprotein binding"/>
    <property type="evidence" value="ECO:0000314"/>
    <property type="project" value="BHF-UCL"/>
</dbReference>
<dbReference type="GO" id="GO:0005509">
    <property type="term" value="F:calcium ion binding"/>
    <property type="evidence" value="ECO:0007669"/>
    <property type="project" value="InterPro"/>
</dbReference>
<dbReference type="GO" id="GO:0048306">
    <property type="term" value="F:calcium-dependent protein binding"/>
    <property type="evidence" value="ECO:0000353"/>
    <property type="project" value="BHF-UCL"/>
</dbReference>
<dbReference type="GO" id="GO:0008035">
    <property type="term" value="F:high-density lipoprotein particle binding"/>
    <property type="evidence" value="ECO:0007669"/>
    <property type="project" value="Ensembl"/>
</dbReference>
<dbReference type="GO" id="GO:0019894">
    <property type="term" value="F:kinesin binding"/>
    <property type="evidence" value="ECO:0007669"/>
    <property type="project" value="Ensembl"/>
</dbReference>
<dbReference type="GO" id="GO:0005041">
    <property type="term" value="F:low-density lipoprotein particle receptor activity"/>
    <property type="evidence" value="ECO:0000304"/>
    <property type="project" value="MGI"/>
</dbReference>
<dbReference type="GO" id="GO:0038025">
    <property type="term" value="F:reelin receptor activity"/>
    <property type="evidence" value="ECO:0000314"/>
    <property type="project" value="UniProtKB"/>
</dbReference>
<dbReference type="GO" id="GO:0030229">
    <property type="term" value="F:very-low-density lipoprotein particle receptor activity"/>
    <property type="evidence" value="ECO:0007669"/>
    <property type="project" value="Ensembl"/>
</dbReference>
<dbReference type="GO" id="GO:0021541">
    <property type="term" value="P:ammon gyrus development"/>
    <property type="evidence" value="ECO:0000315"/>
    <property type="project" value="CACAO"/>
</dbReference>
<dbReference type="GO" id="GO:0071397">
    <property type="term" value="P:cellular response to cholesterol"/>
    <property type="evidence" value="ECO:0007669"/>
    <property type="project" value="Ensembl"/>
</dbReference>
<dbReference type="GO" id="GO:0071363">
    <property type="term" value="P:cellular response to growth factor stimulus"/>
    <property type="evidence" value="ECO:0007669"/>
    <property type="project" value="Ensembl"/>
</dbReference>
<dbReference type="GO" id="GO:0007268">
    <property type="term" value="P:chemical synaptic transmission"/>
    <property type="evidence" value="ECO:0000315"/>
    <property type="project" value="CACAO"/>
</dbReference>
<dbReference type="GO" id="GO:0048813">
    <property type="term" value="P:dendrite morphogenesis"/>
    <property type="evidence" value="ECO:0000315"/>
    <property type="project" value="CACAO"/>
</dbReference>
<dbReference type="GO" id="GO:0006897">
    <property type="term" value="P:endocytosis"/>
    <property type="evidence" value="ECO:0000250"/>
    <property type="project" value="UniProtKB"/>
</dbReference>
<dbReference type="GO" id="GO:0021766">
    <property type="term" value="P:hippocampus development"/>
    <property type="evidence" value="ECO:0000316"/>
    <property type="project" value="MGI"/>
</dbReference>
<dbReference type="GO" id="GO:0021819">
    <property type="term" value="P:layer formation in cerebral cortex"/>
    <property type="evidence" value="ECO:0000316"/>
    <property type="project" value="MGI"/>
</dbReference>
<dbReference type="GO" id="GO:0050804">
    <property type="term" value="P:modulation of chemical synaptic transmission"/>
    <property type="evidence" value="ECO:0000315"/>
    <property type="project" value="BHF-UCL"/>
</dbReference>
<dbReference type="GO" id="GO:1900006">
    <property type="term" value="P:positive regulation of dendrite development"/>
    <property type="evidence" value="ECO:0000316"/>
    <property type="project" value="BHF-UCL"/>
</dbReference>
<dbReference type="GO" id="GO:0061003">
    <property type="term" value="P:positive regulation of dendritic spine morphogenesis"/>
    <property type="evidence" value="ECO:0000315"/>
    <property type="project" value="BHF-UCL"/>
</dbReference>
<dbReference type="GO" id="GO:0038026">
    <property type="term" value="P:reelin-mediated signaling pathway"/>
    <property type="evidence" value="ECO:0000314"/>
    <property type="project" value="UniProtKB"/>
</dbReference>
<dbReference type="GO" id="GO:0042981">
    <property type="term" value="P:regulation of apoptotic process"/>
    <property type="evidence" value="ECO:0000315"/>
    <property type="project" value="UniProtKB"/>
</dbReference>
<dbReference type="GO" id="GO:0045088">
    <property type="term" value="P:regulation of innate immune response"/>
    <property type="evidence" value="ECO:0000315"/>
    <property type="project" value="UniProtKB"/>
</dbReference>
<dbReference type="GO" id="GO:0009410">
    <property type="term" value="P:response to xenobiotic stimulus"/>
    <property type="evidence" value="ECO:0007669"/>
    <property type="project" value="Ensembl"/>
</dbReference>
<dbReference type="GO" id="GO:0021517">
    <property type="term" value="P:ventral spinal cord development"/>
    <property type="evidence" value="ECO:0000270"/>
    <property type="project" value="UniProtKB"/>
</dbReference>
<dbReference type="CDD" id="cd00054">
    <property type="entry name" value="EGF_CA"/>
    <property type="match status" value="1"/>
</dbReference>
<dbReference type="CDD" id="cd00112">
    <property type="entry name" value="LDLa"/>
    <property type="match status" value="7"/>
</dbReference>
<dbReference type="FunFam" id="4.10.400.10:FF:000162">
    <property type="entry name" value="LDL receptor related protein 8"/>
    <property type="match status" value="1"/>
</dbReference>
<dbReference type="FunFam" id="2.10.25.10:FF:000009">
    <property type="entry name" value="Low-density lipoprotein receptor isoform 1"/>
    <property type="match status" value="1"/>
</dbReference>
<dbReference type="FunFam" id="2.10.25.10:FF:000052">
    <property type="entry name" value="low-density lipoprotein receptor isoform X1"/>
    <property type="match status" value="1"/>
</dbReference>
<dbReference type="FunFam" id="2.120.10.30:FF:000002">
    <property type="entry name" value="low-density lipoprotein receptor isoform X1"/>
    <property type="match status" value="1"/>
</dbReference>
<dbReference type="FunFam" id="4.10.400.10:FF:000136">
    <property type="entry name" value="low-density lipoprotein receptor isoform X5"/>
    <property type="match status" value="1"/>
</dbReference>
<dbReference type="FunFam" id="4.10.400.10:FF:000002">
    <property type="entry name" value="Low-density lipoprotein receptor-related protein 1"/>
    <property type="match status" value="1"/>
</dbReference>
<dbReference type="FunFam" id="4.10.400.10:FF:000113">
    <property type="entry name" value="Low-density lipoprotein receptor-related protein 8"/>
    <property type="match status" value="1"/>
</dbReference>
<dbReference type="FunFam" id="4.10.400.10:FF:000138">
    <property type="entry name" value="Low-density lipoprotein receptor-related protein 8"/>
    <property type="match status" value="1"/>
</dbReference>
<dbReference type="FunFam" id="4.10.400.10:FF:000053">
    <property type="entry name" value="Very low density lipoprotein receptor"/>
    <property type="match status" value="1"/>
</dbReference>
<dbReference type="Gene3D" id="2.10.25.10">
    <property type="entry name" value="Laminin"/>
    <property type="match status" value="3"/>
</dbReference>
<dbReference type="Gene3D" id="4.10.400.10">
    <property type="entry name" value="Low-density Lipoprotein Receptor"/>
    <property type="match status" value="8"/>
</dbReference>
<dbReference type="Gene3D" id="2.120.10.30">
    <property type="entry name" value="TolB, C-terminal domain"/>
    <property type="match status" value="1"/>
</dbReference>
<dbReference type="InterPro" id="IPR011042">
    <property type="entry name" value="6-blade_b-propeller_TolB-like"/>
</dbReference>
<dbReference type="InterPro" id="IPR001881">
    <property type="entry name" value="EGF-like_Ca-bd_dom"/>
</dbReference>
<dbReference type="InterPro" id="IPR000742">
    <property type="entry name" value="EGF-like_dom"/>
</dbReference>
<dbReference type="InterPro" id="IPR000152">
    <property type="entry name" value="EGF-type_Asp/Asn_hydroxyl_site"/>
</dbReference>
<dbReference type="InterPro" id="IPR018097">
    <property type="entry name" value="EGF_Ca-bd_CS"/>
</dbReference>
<dbReference type="InterPro" id="IPR036055">
    <property type="entry name" value="LDL_receptor-like_sf"/>
</dbReference>
<dbReference type="InterPro" id="IPR051221">
    <property type="entry name" value="LDLR-related"/>
</dbReference>
<dbReference type="InterPro" id="IPR023415">
    <property type="entry name" value="LDLR_class-A_CS"/>
</dbReference>
<dbReference type="InterPro" id="IPR000033">
    <property type="entry name" value="LDLR_classB_rpt"/>
</dbReference>
<dbReference type="InterPro" id="IPR002172">
    <property type="entry name" value="LDrepeatLR_classA_rpt"/>
</dbReference>
<dbReference type="InterPro" id="IPR049883">
    <property type="entry name" value="NOTCH1_EGF-like"/>
</dbReference>
<dbReference type="PANTHER" id="PTHR22722:SF15">
    <property type="entry name" value="LOW-DENSITY LIPOPROTEIN RECEPTOR-RELATED"/>
    <property type="match status" value="1"/>
</dbReference>
<dbReference type="PANTHER" id="PTHR22722">
    <property type="entry name" value="LOW-DENSITY LIPOPROTEIN RECEPTOR-RELATED PROTEIN 2-RELATED"/>
    <property type="match status" value="1"/>
</dbReference>
<dbReference type="Pfam" id="PF07645">
    <property type="entry name" value="EGF_CA"/>
    <property type="match status" value="1"/>
</dbReference>
<dbReference type="Pfam" id="PF14670">
    <property type="entry name" value="FXa_inhibition"/>
    <property type="match status" value="1"/>
</dbReference>
<dbReference type="Pfam" id="PF00057">
    <property type="entry name" value="Ldl_recept_a"/>
    <property type="match status" value="8"/>
</dbReference>
<dbReference type="Pfam" id="PF00058">
    <property type="entry name" value="Ldl_recept_b"/>
    <property type="match status" value="5"/>
</dbReference>
<dbReference type="PRINTS" id="PR00261">
    <property type="entry name" value="LDLRECEPTOR"/>
</dbReference>
<dbReference type="SMART" id="SM00181">
    <property type="entry name" value="EGF"/>
    <property type="match status" value="4"/>
</dbReference>
<dbReference type="SMART" id="SM00179">
    <property type="entry name" value="EGF_CA"/>
    <property type="match status" value="2"/>
</dbReference>
<dbReference type="SMART" id="SM00192">
    <property type="entry name" value="LDLa"/>
    <property type="match status" value="8"/>
</dbReference>
<dbReference type="SMART" id="SM00135">
    <property type="entry name" value="LY"/>
    <property type="match status" value="5"/>
</dbReference>
<dbReference type="SUPFAM" id="SSF57196">
    <property type="entry name" value="EGF/Laminin"/>
    <property type="match status" value="3"/>
</dbReference>
<dbReference type="SUPFAM" id="SSF57424">
    <property type="entry name" value="LDL receptor-like module"/>
    <property type="match status" value="8"/>
</dbReference>
<dbReference type="SUPFAM" id="SSF63825">
    <property type="entry name" value="YWTD domain"/>
    <property type="match status" value="1"/>
</dbReference>
<dbReference type="PROSITE" id="PS00010">
    <property type="entry name" value="ASX_HYDROXYL"/>
    <property type="match status" value="2"/>
</dbReference>
<dbReference type="PROSITE" id="PS01186">
    <property type="entry name" value="EGF_2"/>
    <property type="match status" value="2"/>
</dbReference>
<dbReference type="PROSITE" id="PS50026">
    <property type="entry name" value="EGF_3"/>
    <property type="match status" value="2"/>
</dbReference>
<dbReference type="PROSITE" id="PS01187">
    <property type="entry name" value="EGF_CA"/>
    <property type="match status" value="1"/>
</dbReference>
<dbReference type="PROSITE" id="PS01209">
    <property type="entry name" value="LDLRA_1"/>
    <property type="match status" value="8"/>
</dbReference>
<dbReference type="PROSITE" id="PS50068">
    <property type="entry name" value="LDLRA_2"/>
    <property type="match status" value="8"/>
</dbReference>
<dbReference type="PROSITE" id="PS51120">
    <property type="entry name" value="LDLRB"/>
    <property type="match status" value="5"/>
</dbReference>
<feature type="signal peptide" evidence="2">
    <location>
        <begin position="1"/>
        <end position="28"/>
    </location>
</feature>
<feature type="chain" id="PRO_0000017333" description="Low-density lipoprotein receptor-related protein 8">
    <location>
        <begin position="29"/>
        <end position="996"/>
    </location>
</feature>
<feature type="topological domain" description="Extracellular" evidence="2">
    <location>
        <begin position="29"/>
        <end position="858"/>
    </location>
</feature>
<feature type="transmembrane region" description="Helical" evidence="2">
    <location>
        <begin position="859"/>
        <end position="881"/>
    </location>
</feature>
<feature type="topological domain" description="Cytoplasmic" evidence="2">
    <location>
        <begin position="882"/>
        <end position="996"/>
    </location>
</feature>
<feature type="domain" description="LDL-receptor class A 1" evidence="4">
    <location>
        <begin position="40"/>
        <end position="76"/>
    </location>
</feature>
<feature type="domain" description="LDL-receptor class A 2" evidence="4">
    <location>
        <begin position="79"/>
        <end position="117"/>
    </location>
</feature>
<feature type="domain" description="LDL-receptor class A 3" evidence="4">
    <location>
        <begin position="120"/>
        <end position="158"/>
    </location>
</feature>
<feature type="domain" description="LDL-receptor class A 4" evidence="4">
    <location>
        <begin position="160"/>
        <end position="196"/>
    </location>
</feature>
<feature type="domain" description="LDL-receptor class A 5" evidence="4">
    <location>
        <begin position="199"/>
        <end position="238"/>
    </location>
</feature>
<feature type="domain" description="LDL-receptor class A 6" evidence="4">
    <location>
        <begin position="250"/>
        <end position="287"/>
    </location>
</feature>
<feature type="domain" description="LDL-receptor class A 7" evidence="4">
    <location>
        <begin position="290"/>
        <end position="326"/>
    </location>
</feature>
<feature type="domain" description="LDL-receptor class A 8" evidence="4">
    <location>
        <begin position="330"/>
        <end position="369"/>
    </location>
</feature>
<feature type="domain" description="EGF-like 1" evidence="3">
    <location>
        <begin position="364"/>
        <end position="408"/>
    </location>
</feature>
<feature type="domain" description="EGF-like 2; calcium-binding" evidence="3">
    <location>
        <begin position="409"/>
        <end position="448"/>
    </location>
</feature>
<feature type="repeat" description="LDL-receptor class B 1">
    <location>
        <begin position="495"/>
        <end position="541"/>
    </location>
</feature>
<feature type="repeat" description="LDL-receptor class B 2">
    <location>
        <begin position="542"/>
        <end position="584"/>
    </location>
</feature>
<feature type="repeat" description="LDL-receptor class B 3">
    <location>
        <begin position="585"/>
        <end position="628"/>
    </location>
</feature>
<feature type="repeat" description="LDL-receptor class B 4">
    <location>
        <begin position="629"/>
        <end position="671"/>
    </location>
</feature>
<feature type="repeat" description="LDL-receptor class B 5">
    <location>
        <begin position="672"/>
        <end position="714"/>
    </location>
</feature>
<feature type="region of interest" description="Clustered O-linked oligosaccharides">
    <location>
        <begin position="773"/>
        <end position="831"/>
    </location>
</feature>
<feature type="region of interest" description="Disordered" evidence="5">
    <location>
        <begin position="778"/>
        <end position="851"/>
    </location>
</feature>
<feature type="compositionally biased region" description="Polar residues" evidence="5">
    <location>
        <begin position="802"/>
        <end position="815"/>
    </location>
</feature>
<feature type="compositionally biased region" description="Low complexity" evidence="5">
    <location>
        <begin position="824"/>
        <end position="839"/>
    </location>
</feature>
<feature type="compositionally biased region" description="Polar residues" evidence="5">
    <location>
        <begin position="840"/>
        <end position="851"/>
    </location>
</feature>
<feature type="binding site" evidence="1">
    <location>
        <position position="58"/>
    </location>
    <ligand>
        <name>Ca(2+)</name>
        <dbReference type="ChEBI" id="CHEBI:29108"/>
    </ligand>
</feature>
<feature type="binding site" evidence="1">
    <location>
        <position position="61"/>
    </location>
    <ligand>
        <name>Ca(2+)</name>
        <dbReference type="ChEBI" id="CHEBI:29108"/>
    </ligand>
</feature>
<feature type="binding site" evidence="1">
    <location>
        <position position="63"/>
    </location>
    <ligand>
        <name>Ca(2+)</name>
        <dbReference type="ChEBI" id="CHEBI:29108"/>
    </ligand>
</feature>
<feature type="binding site" evidence="1">
    <location>
        <position position="65"/>
    </location>
    <ligand>
        <name>Ca(2+)</name>
        <dbReference type="ChEBI" id="CHEBI:29108"/>
    </ligand>
</feature>
<feature type="binding site" evidence="1">
    <location>
        <position position="71"/>
    </location>
    <ligand>
        <name>Ca(2+)</name>
        <dbReference type="ChEBI" id="CHEBI:29108"/>
    </ligand>
</feature>
<feature type="binding site" evidence="1">
    <location>
        <position position="72"/>
    </location>
    <ligand>
        <name>Ca(2+)</name>
        <dbReference type="ChEBI" id="CHEBI:29108"/>
    </ligand>
</feature>
<feature type="glycosylation site" description="N-linked (GlcNAc...) asparagine" evidence="2">
    <location>
        <position position="170"/>
    </location>
</feature>
<feature type="glycosylation site" description="N-linked (GlcNAc...) asparagine" evidence="2">
    <location>
        <position position="551"/>
    </location>
</feature>
<feature type="glycosylation site" description="N-linked (GlcNAc...) asparagine" evidence="2">
    <location>
        <position position="805"/>
    </location>
</feature>
<feature type="glycosylation site" description="N-linked (GlcNAc...) asparagine" evidence="2">
    <location>
        <position position="840"/>
    </location>
</feature>
<feature type="disulfide bond" evidence="4">
    <location>
        <begin position="41"/>
        <end position="53"/>
    </location>
</feature>
<feature type="disulfide bond" evidence="4">
    <location>
        <begin position="48"/>
        <end position="66"/>
    </location>
</feature>
<feature type="disulfide bond" evidence="4">
    <location>
        <begin position="60"/>
        <end position="75"/>
    </location>
</feature>
<feature type="disulfide bond" evidence="4">
    <location>
        <begin position="80"/>
        <end position="92"/>
    </location>
</feature>
<feature type="disulfide bond" evidence="4">
    <location>
        <begin position="87"/>
        <end position="105"/>
    </location>
</feature>
<feature type="disulfide bond" evidence="4">
    <location>
        <begin position="99"/>
        <end position="116"/>
    </location>
</feature>
<feature type="disulfide bond" evidence="4">
    <location>
        <begin position="121"/>
        <end position="135"/>
    </location>
</feature>
<feature type="disulfide bond" evidence="4">
    <location>
        <begin position="128"/>
        <end position="148"/>
    </location>
</feature>
<feature type="disulfide bond" evidence="4">
    <location>
        <begin position="142"/>
        <end position="157"/>
    </location>
</feature>
<feature type="disulfide bond" evidence="4">
    <location>
        <begin position="161"/>
        <end position="173"/>
    </location>
</feature>
<feature type="disulfide bond" evidence="4">
    <location>
        <begin position="168"/>
        <end position="186"/>
    </location>
</feature>
<feature type="disulfide bond" evidence="4">
    <location>
        <begin position="180"/>
        <end position="195"/>
    </location>
</feature>
<feature type="disulfide bond" evidence="4">
    <location>
        <begin position="200"/>
        <end position="213"/>
    </location>
</feature>
<feature type="disulfide bond" evidence="4">
    <location>
        <begin position="207"/>
        <end position="226"/>
    </location>
</feature>
<feature type="disulfide bond" evidence="4">
    <location>
        <begin position="220"/>
        <end position="237"/>
    </location>
</feature>
<feature type="disulfide bond" evidence="4">
    <location>
        <begin position="251"/>
        <end position="264"/>
    </location>
</feature>
<feature type="disulfide bond" evidence="4">
    <location>
        <begin position="259"/>
        <end position="277"/>
    </location>
</feature>
<feature type="disulfide bond" evidence="4">
    <location>
        <begin position="271"/>
        <end position="286"/>
    </location>
</feature>
<feature type="disulfide bond" evidence="4">
    <location>
        <begin position="291"/>
        <end position="303"/>
    </location>
</feature>
<feature type="disulfide bond" evidence="4">
    <location>
        <begin position="298"/>
        <end position="316"/>
    </location>
</feature>
<feature type="disulfide bond" evidence="4">
    <location>
        <begin position="310"/>
        <end position="325"/>
    </location>
</feature>
<feature type="disulfide bond" evidence="4">
    <location>
        <begin position="331"/>
        <end position="344"/>
    </location>
</feature>
<feature type="disulfide bond" evidence="4">
    <location>
        <begin position="339"/>
        <end position="357"/>
    </location>
</feature>
<feature type="disulfide bond" evidence="4">
    <location>
        <begin position="351"/>
        <end position="368"/>
    </location>
</feature>
<feature type="disulfide bond" evidence="3">
    <location>
        <begin position="373"/>
        <end position="384"/>
    </location>
</feature>
<feature type="disulfide bond" evidence="3">
    <location>
        <begin position="380"/>
        <end position="393"/>
    </location>
</feature>
<feature type="disulfide bond" evidence="3">
    <location>
        <begin position="395"/>
        <end position="407"/>
    </location>
</feature>
<feature type="disulfide bond" evidence="3">
    <location>
        <begin position="413"/>
        <end position="423"/>
    </location>
</feature>
<feature type="disulfide bond" evidence="3">
    <location>
        <begin position="419"/>
        <end position="432"/>
    </location>
</feature>
<feature type="disulfide bond" evidence="3">
    <location>
        <begin position="434"/>
        <end position="447"/>
    </location>
</feature>
<feature type="splice variant" id="VSP_010309" description="In isoform 2." evidence="18">
    <location>
        <begin position="160"/>
        <end position="285"/>
    </location>
</feature>
<feature type="mutagenesis site" description="Lower affinity for RAP. Abolishes binding to Reelin." evidence="14">
    <original>D</original>
    <variation>N</variation>
    <location>
        <position position="61"/>
    </location>
</feature>
<feature type="mutagenesis site" description="Same affinity for RAP. Same affinity for Reelin." evidence="14">
    <original>E</original>
    <variation>Q</variation>
    <location>
        <position position="102"/>
    </location>
</feature>
<feature type="mutagenesis site" description="Same affinity for RAP. Lower affinity for Reelin." evidence="14">
    <original>E</original>
    <variation>Q</variation>
    <location>
        <position position="145"/>
    </location>
</feature>
<feature type="sequence conflict" description="In Ref. 1; BAB46965." evidence="19" ref="1">
    <original>P</original>
    <variation>L</variation>
    <location>
        <position position="32"/>
    </location>
</feature>
<feature type="sequence conflict" description="In Ref. 2." evidence="19" ref="2">
    <original>CS</original>
    <variation>SA</variation>
    <location>
        <begin position="286"/>
        <end position="287"/>
    </location>
</feature>
<feature type="sequence conflict" description="In Ref. 2; CAC38356." evidence="19" ref="2">
    <original>T</original>
    <variation>P</variation>
    <location>
        <position position="610"/>
    </location>
</feature>
<feature type="sequence conflict" description="In Ref. 2; CAC38356." evidence="19" ref="2">
    <original>DK</original>
    <variation>VQ</variation>
    <location>
        <begin position="672"/>
        <end position="673"/>
    </location>
</feature>
<feature type="sequence conflict" description="In Ref. 2; CAC38356." evidence="19" ref="2">
    <original>KQ</original>
    <variation>NE</variation>
    <location>
        <begin position="715"/>
        <end position="716"/>
    </location>
</feature>
<feature type="sequence conflict" description="In Ref. 2; CAC38356." evidence="19" ref="2">
    <original>Y</original>
    <variation>F</variation>
    <location>
        <position position="750"/>
    </location>
</feature>
<feature type="sequence conflict" description="In Ref. 2; CAC38356." evidence="19" ref="2">
    <original>R</original>
    <variation>K</variation>
    <location>
        <position position="766"/>
    </location>
</feature>
<feature type="sequence conflict" description="In Ref. 2; CAC38356." evidence="19" ref="2">
    <original>T</original>
    <variation>A</variation>
    <location>
        <position position="802"/>
    </location>
</feature>
<feature type="sequence conflict" description="In Ref. 2; CAC38356." evidence="19" ref="2">
    <original>AAA</original>
    <variation>VAV</variation>
    <location>
        <begin position="815"/>
        <end position="817"/>
    </location>
</feature>
<sequence>MGRPELGALRPLALLLLLLLQLQHLSAADPLPGGQGPVKECEEDQFRCRNERCIPLVWRCDEDNDCSDNSDEDDCPKRTCADSDFTCDNGHCIPERWKCDGEEECPDGSDESKATCSSEECPAEKLSCGPTSHKCVPASWRCDGEKDCEGGADEAGCPTLCAPHEFQCSNRSCLASVFVCDGDDDCGDGSDERGCSDPACPPREFRCGGGGTCIPERWVCDRQFDCEDRSDEAAELCGRAGQGTTATPAACAPTAQFTCRSGECIHLGWRCDGDRDCKDKSDEADCSPGPCRENEFQCGDGTCVLAIKRCNQERDCPDGSDEAGCLQESTCEGPRRFQCKSGECVDGGKVCDDQRDCRDWSDEPQKVCGLNECLHNNGGCSHICTDLKIGFECTCPAGFQLLDQKTCGDIDECQDPDACSQICVNYKGYFKCECHPGYEMDTLTKNCKAVAGKSPSLIFTNRHEVRRIDLVKRDYSRLIPMLKNVVALDVEVATNRIYWCDLSYRKIYSAHMDKASIPDEQVVLIDEQLHSPEGLAVDWVHKHIYWTDSGNKTISVATTDGRRRCTLFSRELSEPRAIAVDPLRGFMYWSDWGFQAKIEKAGLNGADRQTLVSDNIEWPNGITLDLLSQRLYWVDSKLHQLSSIDFNGGNRKMLIFSTDFLSHPFGVAVFEDKVFWTDLENEAIFSANRLNGLEIAILAENLNNPHDIVIFHELKQPKAADACDLSAQPNGGCEYLCLPAPQISSHSPKYTCACPDTMWLGPDMKRCYRAPQSTSTTTLASAMTRTVPATTRAPGTTIHDPTYQNHSTETPSQTAAAPHSVNVPRAPSTSPSTPSPATSNHSQHYGNEGSQMGSTVTAAVIGVIVPIVVIALLCMSGYLIWRNWKRKNTKSMNFDNPVYRKTTEEEEEDELHIGRTAQIGHVYPAAISNYDRPLWAEPCLGETRDLEDPAPALKELFVLPGEPRSQLHQLPKNPLSELPVVKCKRVALSLEDDGLP</sequence>
<proteinExistence type="evidence at protein level"/>
<evidence type="ECO:0000250" key="1">
    <source>
        <dbReference type="UniProtKB" id="Q14114"/>
    </source>
</evidence>
<evidence type="ECO:0000255" key="2"/>
<evidence type="ECO:0000255" key="3">
    <source>
        <dbReference type="PROSITE-ProRule" id="PRU00076"/>
    </source>
</evidence>
<evidence type="ECO:0000255" key="4">
    <source>
        <dbReference type="PROSITE-ProRule" id="PRU00124"/>
    </source>
</evidence>
<evidence type="ECO:0000256" key="5">
    <source>
        <dbReference type="SAM" id="MobiDB-lite"/>
    </source>
</evidence>
<evidence type="ECO:0000269" key="6">
    <source>
    </source>
</evidence>
<evidence type="ECO:0000269" key="7">
    <source>
    </source>
</evidence>
<evidence type="ECO:0000269" key="8">
    <source>
    </source>
</evidence>
<evidence type="ECO:0000269" key="9">
    <source>
    </source>
</evidence>
<evidence type="ECO:0000269" key="10">
    <source>
    </source>
</evidence>
<evidence type="ECO:0000269" key="11">
    <source>
    </source>
</evidence>
<evidence type="ECO:0000269" key="12">
    <source>
    </source>
</evidence>
<evidence type="ECO:0000269" key="13">
    <source>
    </source>
</evidence>
<evidence type="ECO:0000269" key="14">
    <source>
    </source>
</evidence>
<evidence type="ECO:0000269" key="15">
    <source>
    </source>
</evidence>
<evidence type="ECO:0000269" key="16">
    <source>
    </source>
</evidence>
<evidence type="ECO:0000269" key="17">
    <source>
    </source>
</evidence>
<evidence type="ECO:0000303" key="18">
    <source>
    </source>
</evidence>
<evidence type="ECO:0000305" key="19"/>
<comment type="function">
    <text evidence="6 8 9 12 14 15 16 17">Cell surface receptor for Reelin (RELN) and apolipoprotein E (apoE)-containing ligands (PubMed:10380922, PubMed:11294845, PubMed:12899622, PubMed:18778775). LRP8 participates in transmitting the extracellular Reelin signal to intracellular signaling processes, by binding to DAB1 on its cytoplasmic tail (PubMed:10380922). Reelin acts via both the VLDL receptor (VLDLR) and LRP8 to regulate DAB1 tyrosine phosphorylation and microtubule function in neurons (PubMed:10380922). LRP8 has higher affinity for Reelin than VLDLR (PubMed:10380922, PubMed:11294845). LRP8 is thus a key component of the Reelin pathway which governs neuronal layering of the forebrain during embryonic brain development (PubMed:10380922, PubMed:11294845, PubMed:18778775). Binds the endoplasmic reticulum resident receptor-associated protein (RAP) (PubMed:12899622). Binds dimers of beta 2-glycoprotein I and may be involved in the suppression of platelet aggregation in the vasculature. Highly expressed in the initial segment of the epididymis, where it affects the functional expression of clusterin and phospholipid hydroperoxide glutathione peroxidase (PHGPx), two proteins required for sperm maturation (PubMed:12695510). May also function as an endocytic receptor (PubMed:12169628). Not required for endocytic uptake of SEPP1 in the kidney which is mediated by LRP2 (PubMed:18174160). Together with its ligand, apolipoprotein E (apoE), may indirectly play a role in the suppression of the innate immune response by controlling the survival of myeloid-derived suppressor cells (PubMed:29336888).</text>
</comment>
<comment type="subunit">
    <text evidence="1 11">Homooligomer (By similarity). Interacts with VLDLR (By similarity). Reelin associates with two or more receptor molecules. Interacts with DAB1 and JNK-interacting proteins. Interacts with SNX17. Interacts with PCSK9 (By similarity). Interacts with MDK; this interaction is calcium dependent (PubMed:12573468). Interacts with CLU (By similarity).</text>
</comment>
<comment type="interaction">
    <interactant intactId="EBI-432319">
        <id>Q924X6</id>
    </interactant>
    <interactant intactId="EBI-300895">
        <id>Q62108</id>
        <label>Dlg4</label>
    </interactant>
    <organismsDiffer>false</organismsDiffer>
    <experiments>3</experiments>
</comment>
<comment type="interaction">
    <interactant intactId="EBI-432319">
        <id>Q924X6</id>
    </interactant>
    <interactant intactId="EBI-400084">
        <id>P35438</id>
        <label>Grin1</label>
    </interactant>
    <organismsDiffer>false</organismsDiffer>
    <experiments>4</experiments>
</comment>
<comment type="interaction">
    <interactant intactId="EBI-432319">
        <id>Q924X6</id>
    </interactant>
    <interactant intactId="EBI-9248666">
        <id>Q60841</id>
        <label>Reln</label>
    </interactant>
    <organismsDiffer>false</organismsDiffer>
    <experiments>4</experiments>
</comment>
<comment type="interaction">
    <interactant intactId="EBI-432319">
        <id>Q924X6</id>
    </interactant>
    <interactant intactId="EBI-2114682">
        <id>P02749</id>
        <label>APOH</label>
    </interactant>
    <organismsDiffer>true</organismsDiffer>
    <experiments>2</experiments>
</comment>
<comment type="interaction">
    <interactant intactId="EBI-432319">
        <id>Q924X6</id>
    </interactant>
    <interactant intactId="EBI-919734">
        <id>Q99068</id>
        <label>Lrpap1</label>
    </interactant>
    <organismsDiffer>true</organismsDiffer>
    <experiments>2</experiments>
</comment>
<comment type="subcellular location">
    <subcellularLocation>
        <location evidence="1">Cell membrane</location>
        <topology evidence="2">Single-pass type I membrane protein</topology>
    </subcellularLocation>
    <subcellularLocation>
        <location evidence="10 13">Secreted</location>
    </subcellularLocation>
    <text evidence="10 13">Isoforms that contain the exon coding for a furin-type cleavage site are proteolytically processed, leading to a secreted receptor fragment.</text>
</comment>
<comment type="alternative products">
    <event type="alternative splicing"/>
    <isoform>
        <id>Q924X6-1</id>
        <name>1</name>
        <sequence type="displayed"/>
    </isoform>
    <isoform>
        <id>Q924X6-2</id>
        <name>2</name>
        <sequence type="described" ref="VSP_010309"/>
    </isoform>
    <isoform>
        <id>Q924X6-5</id>
        <name>3</name>
        <name>ApoER2delta4-6,8-F</name>
        <sequence type="not described"/>
    </isoform>
</comment>
<comment type="tissue specificity">
    <text evidence="7">Expressed in neurons throughout the brain, with strong expression in pyramidal neurons of the hippocampus, granule cells of the dentate gyrus, cortical neurons and Purkinje cells of the cerebellum. Also expressed in the epithelium of the choroid plexus and of the blood vessels (apical expression), as well as in the epididymis.</text>
</comment>
<comment type="domain">
    <text>The cytoplasmic domain is involved in the binding of DAB1 and in the recruitment of JNK-interacting proteins. Isoforms, which lack part of the cytoplasmic domain, are unable to recruit members of the family of JNK interacting proteins (JIP) to the cytoplasmic tail.</text>
</comment>
<comment type="PTM">
    <text evidence="13">O-glycosylated. Some alternatively spliced isoforms lack the O-linked sugar domain.</text>
</comment>
<comment type="PTM">
    <text evidence="10 13">Undergoes sequential, furin and gamma-secretase dependent, proteolytic processing, resulting in the extracellular release of the entire ligand-binding domain as a soluble polypeptide and in the intracellular domain (ICD) release into the cytoplasm. The gamma-secretase-dependent proteolytical processing occurs after the bulk of the extracellular domain has been shed, in a furin-dependent manner, in alternatively spliced isoforms carrying the furin cleavage site. Hypoglycosylation (mainly hypo-O-glycosylation) leads to increased extracellular cleavage, which in turn results in accelerating release of the intracellular domain (ICD) by the gamma-secretase. The resulting receptor fragment is able to inhibit Reelin signaling and in particular the Reelin-induced DAB1 phosphorylation.</text>
</comment>
<comment type="PTM">
    <text evidence="1">Tyrosine phosphorylated upon apoE binding.</text>
</comment>
<comment type="PTM">
    <text evidence="1">Ubiquitinated by MYLIP leading to degradation.</text>
</comment>
<comment type="disruption phenotype">
    <text evidence="6 15 16">Mice which are deficient in LRP8 have neuronal migration defect (PubMed:10380922, PubMed:18778775). Targeted disruption of LRP8 and VLVLR together results in a phenotype virtually indistinguishable from that seen in 'reeler' and 'scrambler' mice (PubMed:10380922). Subtle effects of VLDLR deletion are found mainly in the cerebellum, whereas lack of LRP8 predominantly affects the positioning of the neurons in the neocortex (PubMed:10380922). Besides brain formation defects, LRP8-deficient mice also exhibit male infertility (PubMed:10380922). Does not affect endocytosis of SEPP1 in the kidney proximal tubule (PubMed:18174160).</text>
</comment>
<comment type="miscellaneous">
    <molecule>Isoform 3</molecule>
    <text evidence="19">Contains a 18 aa insert in the extracellular part which carries a furin cleavage site.</text>
</comment>
<comment type="similarity">
    <text evidence="19">Belongs to the LDLR family.</text>
</comment>
<keyword id="KW-0025">Alternative splicing</keyword>
<keyword id="KW-0106">Calcium</keyword>
<keyword id="KW-1003">Cell membrane</keyword>
<keyword id="KW-1015">Disulfide bond</keyword>
<keyword id="KW-0245">EGF-like domain</keyword>
<keyword id="KW-0254">Endocytosis</keyword>
<keyword id="KW-0325">Glycoprotein</keyword>
<keyword id="KW-0472">Membrane</keyword>
<keyword id="KW-0479">Metal-binding</keyword>
<keyword id="KW-0597">Phosphoprotein</keyword>
<keyword id="KW-0675">Receptor</keyword>
<keyword id="KW-1185">Reference proteome</keyword>
<keyword id="KW-0677">Repeat</keyword>
<keyword id="KW-0964">Secreted</keyword>
<keyword id="KW-0732">Signal</keyword>
<keyword id="KW-0812">Transmembrane</keyword>
<keyword id="KW-1133">Transmembrane helix</keyword>
<keyword id="KW-0832">Ubl conjugation</keyword>
<gene>
    <name type="primary">Lrp8</name>
    <name type="synonym">Apoer2</name>
</gene>
<protein>
    <recommendedName>
        <fullName>Low-density lipoprotein receptor-related protein 8</fullName>
        <shortName>LRP-8</shortName>
    </recommendedName>
    <alternativeName>
        <fullName>Apolipoprotein E receptor 2</fullName>
    </alternativeName>
</protein>
<organism>
    <name type="scientific">Mus musculus</name>
    <name type="common">Mouse</name>
    <dbReference type="NCBI Taxonomy" id="10090"/>
    <lineage>
        <taxon>Eukaryota</taxon>
        <taxon>Metazoa</taxon>
        <taxon>Chordata</taxon>
        <taxon>Craniata</taxon>
        <taxon>Vertebrata</taxon>
        <taxon>Euteleostomi</taxon>
        <taxon>Mammalia</taxon>
        <taxon>Eutheria</taxon>
        <taxon>Euarchontoglires</taxon>
        <taxon>Glires</taxon>
        <taxon>Rodentia</taxon>
        <taxon>Myomorpha</taxon>
        <taxon>Muroidea</taxon>
        <taxon>Muridae</taxon>
        <taxon>Murinae</taxon>
        <taxon>Mus</taxon>
        <taxon>Mus</taxon>
    </lineage>
</organism>
<accession>Q924X6</accession>
<accession>Q8CAK9</accession>
<accession>Q8CDF5</accession>
<accession>Q921B6</accession>
<reference key="1">
    <citation type="journal article" date="1998" name="J. Biochem.">
        <title>Evolution of the apolipoprotein E receptor 2 gene by exon loss.</title>
        <authorList>
            <person name="Kim H.-J."/>
            <person name="Kim D.-H."/>
            <person name="Magoori K."/>
            <person name="Saeki S."/>
            <person name="Yamamoto T."/>
        </authorList>
    </citation>
    <scope>NUCLEOTIDE SEQUENCE [MRNA] (ISOFORM 1)</scope>
    <source>
        <tissue>Brain</tissue>
    </source>
</reference>
<reference key="2">
    <citation type="journal article" date="2001" name="J. Biol. Chem.">
        <title>Alternative splicing in the ligand binding domain of mouse ApoE receptor-2 produces receptor variants binding reelin but not alpha2-macroglobulin.</title>
        <authorList>
            <person name="Brandes C."/>
            <person name="Kahr L."/>
            <person name="Stockinger W."/>
            <person name="Hiesberger T."/>
            <person name="Schneider W.J."/>
            <person name="Nimpf J."/>
        </authorList>
    </citation>
    <scope>NUCLEOTIDE SEQUENCE [MRNA] (ISOFORM 2)</scope>
    <scope>ALTERNATIVE SPLICING</scope>
    <scope>FUNCTION</scope>
    <scope>INTERACTION WITH REELIN AND ALPHA2-MACROGLOBULIN</scope>
</reference>
<reference key="3">
    <citation type="journal article" date="2002" name="EMBO J.">
        <title>The PX-domain protein SNX17 interacts with members of the LDL receptor family and modulates endocytosis of the LDL receptor.</title>
        <authorList>
            <person name="Stockinger W."/>
            <person name="Sailler B."/>
            <person name="Strasser V."/>
            <person name="Recheis B."/>
            <person name="Fasching D."/>
            <person name="Kahr L."/>
            <person name="Schneider W.J."/>
            <person name="Nimpf J."/>
        </authorList>
    </citation>
    <scope>FUNCTION</scope>
    <scope>INTERACTION WITH SNX17</scope>
</reference>
<reference key="4">
    <citation type="journal article" date="2003" name="J. Biol. Chem.">
        <title>Differential glycosylation regulates processing of lipoprotein receptors by gamma-secretase.</title>
        <authorList>
            <person name="May P."/>
            <person name="Bock H.H."/>
            <person name="Nimpf J."/>
            <person name="Herz J."/>
        </authorList>
    </citation>
    <scope>SUBCELLULAR LOCATION</scope>
    <scope>ALTERNATIVE SPLICING</scope>
    <scope>GLYCOSYLATION</scope>
    <scope>PROTEOLYTIC PROCESSING</scope>
</reference>
<reference key="5">
    <citation type="journal article" date="2002" name="EMBO J.">
        <title>A secreted soluble form of ApoE receptor 2 acts as a dominant-negative receptor and inhibits Reelin signaling.</title>
        <authorList>
            <person name="Koch S."/>
            <person name="Strasser V."/>
            <person name="Hauser C."/>
            <person name="Fasching D."/>
            <person name="Brandes C."/>
            <person name="Bajari T.M."/>
            <person name="Schneider W.J."/>
            <person name="Nimpf J."/>
        </authorList>
    </citation>
    <scope>SUBCELLULAR LOCATION</scope>
    <scope>ALTERNATIVE SPLICING</scope>
    <scope>PROTEOLYTIC PROCESSING</scope>
</reference>
<reference key="6">
    <citation type="journal article" date="2003" name="J. Biol. Chem.">
        <title>Essential role of the apolipoprotein E receptor-2 in sperm development.</title>
        <authorList>
            <person name="Andersen O.M."/>
            <person name="Yeung C.H."/>
            <person name="Vorum H."/>
            <person name="Wellner M."/>
            <person name="Andreassen T.K."/>
            <person name="Erdmann B."/>
            <person name="Mueller E.C."/>
            <person name="Herz J."/>
            <person name="Otto A."/>
            <person name="Cooper T.G."/>
            <person name="Willnow T.E."/>
        </authorList>
    </citation>
    <scope>FUNCTION IN SPERM DEVELOPMENT</scope>
</reference>
<reference key="7">
    <citation type="journal article" date="1999" name="Cell">
        <title>Reeler/Disabled-like disruption of neuronal migration in knockout mice lacking the VLDL receptor and ApoE receptor 2.</title>
        <authorList>
            <person name="Trommsdorff M."/>
            <person name="Gotthardt M."/>
            <person name="Hiesberger T."/>
            <person name="Shelton J."/>
            <person name="Stockinger W."/>
            <person name="Nimpf J."/>
            <person name="Hammer R.E."/>
            <person name="Richardson J.A."/>
            <person name="Herz J."/>
        </authorList>
    </citation>
    <scope>FUNCTION</scope>
    <scope>INTERACTION WITH DAB1</scope>
    <scope>DISRUPTION PHENOTYPE</scope>
</reference>
<reference key="8">
    <citation type="journal article" date="2000" name="J. Biol. Chem.">
        <title>The reelin receptor ApoER2 recruits JNK-interacting proteins-1 and -2.</title>
        <authorList>
            <person name="Stockinger W."/>
            <person name="Brandes C."/>
            <person name="Fasching D."/>
            <person name="Hermann M."/>
            <person name="Gotthardt M."/>
            <person name="Herz J."/>
            <person name="Schneider W.J."/>
            <person name="Nimpf J."/>
        </authorList>
    </citation>
    <scope>INTERACTION WITH JNK-INTERACTING PROTEINS</scope>
    <scope>TISSUE SPECIFICITY</scope>
</reference>
<reference key="9">
    <citation type="journal article" date="2003" name="Biochemistry">
        <title>Differential binding of ligands to the apolipoprotein E receptor 2.</title>
        <authorList>
            <person name="Andersen O.M."/>
            <person name="Benhayon D."/>
            <person name="Curran T."/>
            <person name="Willnow T.E."/>
        </authorList>
    </citation>
    <scope>FUNCTION</scope>
    <scope>INTERACTION WITH RAP AND REELIN</scope>
    <scope>STOICHIOMETRY</scope>
    <scope>MUTAGENESIS OF ASP-61; GLU-102 AND GLU-145</scope>
</reference>
<reference key="10">
    <citation type="journal article" date="2003" name="Neurosci. Res.">
        <title>Receptor-type protein tyrosine phosphatase zeta as a component of the signaling receptor complex for midkine-dependent survival of embryonic neurons.</title>
        <authorList>
            <person name="Sakaguchi N."/>
            <person name="Muramatsu H."/>
            <person name="Ichihara-Tanaka K."/>
            <person name="Maeda N."/>
            <person name="Noda M."/>
            <person name="Yamamoto T."/>
            <person name="Michikawa M."/>
            <person name="Ikematsu S."/>
            <person name="Sakuma S."/>
            <person name="Muramatsu T."/>
        </authorList>
    </citation>
    <scope>INTERACTION WITH MDK</scope>
</reference>
<reference key="11">
    <citation type="journal article" date="2008" name="J. Biol. Chem.">
        <title>Megalin mediates selenoprotein P uptake by kidney proximal tubule epithelial cells.</title>
        <authorList>
            <person name="Olson G.E."/>
            <person name="Winfrey V.P."/>
            <person name="Hill K.E."/>
            <person name="Burk R.F."/>
        </authorList>
    </citation>
    <scope>FUNCTION</scope>
    <scope>DISRUPTION PHENOTYPE</scope>
</reference>
<reference key="12">
    <citation type="journal article" date="2008" name="Neurobiol. Dis.">
        <title>Functional consequences of hippocampal neuronal ectopia in the apolipoprotein E receptor-2 knockout mouse.</title>
        <authorList>
            <person name="Fish K.N."/>
            <person name="Krucker T."/>
        </authorList>
    </citation>
    <scope>FUNCTION</scope>
</reference>
<reference key="13">
    <citation type="journal article" date="2010" name="Cell">
        <title>A tissue-specific atlas of mouse protein phosphorylation and expression.</title>
        <authorList>
            <person name="Huttlin E.L."/>
            <person name="Jedrychowski M.P."/>
            <person name="Elias J.E."/>
            <person name="Goswami T."/>
            <person name="Rad R."/>
            <person name="Beausoleil S.A."/>
            <person name="Villen J."/>
            <person name="Haas W."/>
            <person name="Sowa M.E."/>
            <person name="Gygi S.P."/>
        </authorList>
    </citation>
    <scope>IDENTIFICATION BY MASS SPECTROMETRY [LARGE SCALE ANALYSIS]</scope>
    <source>
        <tissue>Testis</tissue>
    </source>
</reference>
<reference key="14">
    <citation type="journal article" date="2018" name="Cell">
        <title>LXR/ApoE Activation Restricts Innate Immune Suppression in Cancer.</title>
        <authorList>
            <person name="Tavazoie M.F."/>
            <person name="Pollack I."/>
            <person name="Tanqueco R."/>
            <person name="Ostendorf B.N."/>
            <person name="Reis B.S."/>
            <person name="Gonsalves F.C."/>
            <person name="Kurth I."/>
            <person name="Andreu-Agullo C."/>
            <person name="Derbyshire M.L."/>
            <person name="Posada J."/>
            <person name="Takeda S."/>
            <person name="Tafreshian K.N."/>
            <person name="Rowinsky E."/>
            <person name="Szarek M."/>
            <person name="Waltzman R.J."/>
            <person name="Mcmillan E.A."/>
            <person name="Zhao C."/>
            <person name="Mita M."/>
            <person name="Mita A."/>
            <person name="Chmielowski B."/>
            <person name="Postow M.A."/>
            <person name="Ribas A."/>
            <person name="Mucida D."/>
            <person name="Tavazoie S.F."/>
        </authorList>
    </citation>
    <scope>FUNCTION</scope>
</reference>
<name>LRP8_MOUSE</name>